<reference key="1">
    <citation type="submission" date="2008-10" db="EMBL/GenBank/DDBJ databases">
        <title>Genome sequence of Bacillus anthracis str. CDC 684.</title>
        <authorList>
            <person name="Dodson R.J."/>
            <person name="Munk A.C."/>
            <person name="Brettin T."/>
            <person name="Bruce D."/>
            <person name="Detter C."/>
            <person name="Tapia R."/>
            <person name="Han C."/>
            <person name="Sutton G."/>
            <person name="Sims D."/>
        </authorList>
    </citation>
    <scope>NUCLEOTIDE SEQUENCE [LARGE SCALE GENOMIC DNA]</scope>
    <source>
        <strain>CDC 684 / NRRL 3495</strain>
    </source>
</reference>
<keyword id="KW-0028">Amino-acid biosynthesis</keyword>
<keyword id="KW-0100">Branched-chain amino acid biosynthesis</keyword>
<keyword id="KW-0963">Cytoplasm</keyword>
<keyword id="KW-0432">Leucine biosynthesis</keyword>
<keyword id="KW-0464">Manganese</keyword>
<keyword id="KW-0479">Metal-binding</keyword>
<keyword id="KW-0808">Transferase</keyword>
<dbReference type="EC" id="2.3.3.13" evidence="1"/>
<dbReference type="EMBL" id="CP001215">
    <property type="protein sequence ID" value="ACP12116.1"/>
    <property type="molecule type" value="Genomic_DNA"/>
</dbReference>
<dbReference type="RefSeq" id="WP_000809586.1">
    <property type="nucleotide sequence ID" value="NC_012581.1"/>
</dbReference>
<dbReference type="SMR" id="C3L9Q7"/>
<dbReference type="GeneID" id="45021399"/>
<dbReference type="KEGG" id="bah:BAMEG_3175"/>
<dbReference type="HOGENOM" id="CLU_022158_0_1_9"/>
<dbReference type="UniPathway" id="UPA00048">
    <property type="reaction ID" value="UER00070"/>
</dbReference>
<dbReference type="GO" id="GO:0005737">
    <property type="term" value="C:cytoplasm"/>
    <property type="evidence" value="ECO:0007669"/>
    <property type="project" value="UniProtKB-SubCell"/>
</dbReference>
<dbReference type="GO" id="GO:0003852">
    <property type="term" value="F:2-isopropylmalate synthase activity"/>
    <property type="evidence" value="ECO:0007669"/>
    <property type="project" value="UniProtKB-UniRule"/>
</dbReference>
<dbReference type="GO" id="GO:0003985">
    <property type="term" value="F:acetyl-CoA C-acetyltransferase activity"/>
    <property type="evidence" value="ECO:0007669"/>
    <property type="project" value="UniProtKB-UniRule"/>
</dbReference>
<dbReference type="GO" id="GO:0030145">
    <property type="term" value="F:manganese ion binding"/>
    <property type="evidence" value="ECO:0007669"/>
    <property type="project" value="UniProtKB-UniRule"/>
</dbReference>
<dbReference type="GO" id="GO:0009098">
    <property type="term" value="P:L-leucine biosynthetic process"/>
    <property type="evidence" value="ECO:0007669"/>
    <property type="project" value="UniProtKB-UniRule"/>
</dbReference>
<dbReference type="CDD" id="cd07940">
    <property type="entry name" value="DRE_TIM_IPMS"/>
    <property type="match status" value="1"/>
</dbReference>
<dbReference type="FunFam" id="1.10.238.260:FF:000001">
    <property type="entry name" value="2-isopropylmalate synthase"/>
    <property type="match status" value="1"/>
</dbReference>
<dbReference type="FunFam" id="3.20.20.70:FF:000287">
    <property type="entry name" value="2-isopropylmalate synthase"/>
    <property type="match status" value="1"/>
</dbReference>
<dbReference type="FunFam" id="3.30.160.270:FF:000003">
    <property type="entry name" value="2-isopropylmalate synthase"/>
    <property type="match status" value="1"/>
</dbReference>
<dbReference type="Gene3D" id="1.10.238.260">
    <property type="match status" value="1"/>
</dbReference>
<dbReference type="Gene3D" id="3.30.160.270">
    <property type="match status" value="1"/>
</dbReference>
<dbReference type="Gene3D" id="3.20.20.70">
    <property type="entry name" value="Aldolase class I"/>
    <property type="match status" value="1"/>
</dbReference>
<dbReference type="HAMAP" id="MF_01025">
    <property type="entry name" value="LeuA_type1"/>
    <property type="match status" value="1"/>
</dbReference>
<dbReference type="InterPro" id="IPR050073">
    <property type="entry name" value="2-IPM_HCS-like"/>
</dbReference>
<dbReference type="InterPro" id="IPR013709">
    <property type="entry name" value="2-isopropylmalate_synth_dimer"/>
</dbReference>
<dbReference type="InterPro" id="IPR002034">
    <property type="entry name" value="AIPM/Hcit_synth_CS"/>
</dbReference>
<dbReference type="InterPro" id="IPR013785">
    <property type="entry name" value="Aldolase_TIM"/>
</dbReference>
<dbReference type="InterPro" id="IPR054691">
    <property type="entry name" value="LeuA/HCS_post-cat"/>
</dbReference>
<dbReference type="InterPro" id="IPR036230">
    <property type="entry name" value="LeuA_allosteric_dom_sf"/>
</dbReference>
<dbReference type="InterPro" id="IPR005671">
    <property type="entry name" value="LeuA_bact_synth"/>
</dbReference>
<dbReference type="InterPro" id="IPR000891">
    <property type="entry name" value="PYR_CT"/>
</dbReference>
<dbReference type="NCBIfam" id="TIGR00973">
    <property type="entry name" value="leuA_bact"/>
    <property type="match status" value="1"/>
</dbReference>
<dbReference type="NCBIfam" id="NF002086">
    <property type="entry name" value="PRK00915.1-3"/>
    <property type="match status" value="1"/>
</dbReference>
<dbReference type="NCBIfam" id="NF002088">
    <property type="entry name" value="PRK00915.1-5"/>
    <property type="match status" value="1"/>
</dbReference>
<dbReference type="PANTHER" id="PTHR10277:SF9">
    <property type="entry name" value="2-ISOPROPYLMALATE SYNTHASE 1, CHLOROPLASTIC-RELATED"/>
    <property type="match status" value="1"/>
</dbReference>
<dbReference type="PANTHER" id="PTHR10277">
    <property type="entry name" value="HOMOCITRATE SYNTHASE-RELATED"/>
    <property type="match status" value="1"/>
</dbReference>
<dbReference type="Pfam" id="PF22617">
    <property type="entry name" value="HCS_D2"/>
    <property type="match status" value="1"/>
</dbReference>
<dbReference type="Pfam" id="PF00682">
    <property type="entry name" value="HMGL-like"/>
    <property type="match status" value="1"/>
</dbReference>
<dbReference type="Pfam" id="PF08502">
    <property type="entry name" value="LeuA_dimer"/>
    <property type="match status" value="1"/>
</dbReference>
<dbReference type="SMART" id="SM00917">
    <property type="entry name" value="LeuA_dimer"/>
    <property type="match status" value="1"/>
</dbReference>
<dbReference type="SUPFAM" id="SSF110921">
    <property type="entry name" value="2-isopropylmalate synthase LeuA, allosteric (dimerisation) domain"/>
    <property type="match status" value="1"/>
</dbReference>
<dbReference type="SUPFAM" id="SSF51569">
    <property type="entry name" value="Aldolase"/>
    <property type="match status" value="1"/>
</dbReference>
<dbReference type="PROSITE" id="PS00815">
    <property type="entry name" value="AIPM_HOMOCIT_SYNTH_1"/>
    <property type="match status" value="1"/>
</dbReference>
<dbReference type="PROSITE" id="PS00816">
    <property type="entry name" value="AIPM_HOMOCIT_SYNTH_2"/>
    <property type="match status" value="1"/>
</dbReference>
<dbReference type="PROSITE" id="PS50991">
    <property type="entry name" value="PYR_CT"/>
    <property type="match status" value="1"/>
</dbReference>
<feature type="chain" id="PRO_1000149127" description="2-isopropylmalate synthase">
    <location>
        <begin position="1"/>
        <end position="506"/>
    </location>
</feature>
<feature type="domain" description="Pyruvate carboxyltransferase" evidence="1">
    <location>
        <begin position="4"/>
        <end position="266"/>
    </location>
</feature>
<feature type="region of interest" description="Regulatory domain" evidence="1">
    <location>
        <begin position="390"/>
        <end position="506"/>
    </location>
</feature>
<feature type="binding site" evidence="1">
    <location>
        <position position="13"/>
    </location>
    <ligand>
        <name>Mn(2+)</name>
        <dbReference type="ChEBI" id="CHEBI:29035"/>
    </ligand>
</feature>
<feature type="binding site" evidence="1">
    <location>
        <position position="201"/>
    </location>
    <ligand>
        <name>Mn(2+)</name>
        <dbReference type="ChEBI" id="CHEBI:29035"/>
    </ligand>
</feature>
<feature type="binding site" evidence="1">
    <location>
        <position position="203"/>
    </location>
    <ligand>
        <name>Mn(2+)</name>
        <dbReference type="ChEBI" id="CHEBI:29035"/>
    </ligand>
</feature>
<feature type="binding site" evidence="1">
    <location>
        <position position="237"/>
    </location>
    <ligand>
        <name>Mn(2+)</name>
        <dbReference type="ChEBI" id="CHEBI:29035"/>
    </ligand>
</feature>
<gene>
    <name evidence="1" type="primary">leuA</name>
    <name type="ordered locus">BAMEG_3175</name>
</gene>
<proteinExistence type="inferred from homology"/>
<comment type="function">
    <text evidence="1">Catalyzes the condensation of the acetyl group of acetyl-CoA with 3-methyl-2-oxobutanoate (2-ketoisovalerate) to form 3-carboxy-3-hydroxy-4-methylpentanoate (2-isopropylmalate).</text>
</comment>
<comment type="catalytic activity">
    <reaction evidence="1">
        <text>3-methyl-2-oxobutanoate + acetyl-CoA + H2O = (2S)-2-isopropylmalate + CoA + H(+)</text>
        <dbReference type="Rhea" id="RHEA:21524"/>
        <dbReference type="ChEBI" id="CHEBI:1178"/>
        <dbReference type="ChEBI" id="CHEBI:11851"/>
        <dbReference type="ChEBI" id="CHEBI:15377"/>
        <dbReference type="ChEBI" id="CHEBI:15378"/>
        <dbReference type="ChEBI" id="CHEBI:57287"/>
        <dbReference type="ChEBI" id="CHEBI:57288"/>
        <dbReference type="EC" id="2.3.3.13"/>
    </reaction>
</comment>
<comment type="cofactor">
    <cofactor evidence="1">
        <name>Mn(2+)</name>
        <dbReference type="ChEBI" id="CHEBI:29035"/>
    </cofactor>
</comment>
<comment type="pathway">
    <text evidence="1">Amino-acid biosynthesis; L-leucine biosynthesis; L-leucine from 3-methyl-2-oxobutanoate: step 1/4.</text>
</comment>
<comment type="subunit">
    <text evidence="1">Homodimer.</text>
</comment>
<comment type="subcellular location">
    <subcellularLocation>
        <location evidence="1">Cytoplasm</location>
    </subcellularLocation>
</comment>
<comment type="similarity">
    <text evidence="1">Belongs to the alpha-IPM synthase/homocitrate synthase family. LeuA type 1 subfamily.</text>
</comment>
<protein>
    <recommendedName>
        <fullName evidence="1">2-isopropylmalate synthase</fullName>
        <ecNumber evidence="1">2.3.3.13</ecNumber>
    </recommendedName>
    <alternativeName>
        <fullName evidence="1">Alpha-IPM synthase</fullName>
    </alternativeName>
    <alternativeName>
        <fullName evidence="1">Alpha-isopropylmalate synthase</fullName>
    </alternativeName>
</protein>
<accession>C3L9Q7</accession>
<sequence length="506" mass="55375">MKQILFMDTTLRDGEQSPGVNLNEQEKLQIARQLERLGIHVMEAGFAAASEGDFQSVKRIANTIQNATVMSLARAKESDIRRAYEAVKGAVSPRLHVFLATSDIHMKYKLCMSKEDVLDSIYRSVTLGKSLFPTVQFSAEDATRTARDFLAEAVEVAIRAGANVINIPDTVGYTNPEEYYALFKYLQESVPSYEKAIFSCHCHDDLGMAVANSLAAVEGGALQVEGTINGIGERAGNAALEEVAVALHIRKDFYKAEPSMTLKEIKATSTLVSRLTGMVVSKNKAIVGANAFAHESGIHQDGVLKEVTTYEIIEPALVGESQNLFVLGKHSGRHAFTEKMKELGYEFTNDERDAVFEAFKKLADRKKEITEEDLRALMLGEAAFAAQQYNITQLQVHFVSNSTQCATVVLKDEEGNVFEDAATGSGSIEAIYNAIQRILGLECELADYRIQSITQGQDALAHVHVELKEGAHQVSGFGVAQDVLEASARAYVHAAGKLKSFIQLVK</sequence>
<evidence type="ECO:0000255" key="1">
    <source>
        <dbReference type="HAMAP-Rule" id="MF_01025"/>
    </source>
</evidence>
<organism>
    <name type="scientific">Bacillus anthracis (strain CDC 684 / NRRL 3495)</name>
    <dbReference type="NCBI Taxonomy" id="568206"/>
    <lineage>
        <taxon>Bacteria</taxon>
        <taxon>Bacillati</taxon>
        <taxon>Bacillota</taxon>
        <taxon>Bacilli</taxon>
        <taxon>Bacillales</taxon>
        <taxon>Bacillaceae</taxon>
        <taxon>Bacillus</taxon>
        <taxon>Bacillus cereus group</taxon>
    </lineage>
</organism>
<name>LEU1_BACAC</name>